<dbReference type="EC" id="2.7.1.33" evidence="1"/>
<dbReference type="EMBL" id="CP000419">
    <property type="protein sequence ID" value="ABJ66092.1"/>
    <property type="molecule type" value="Genomic_DNA"/>
</dbReference>
<dbReference type="RefSeq" id="WP_002950487.1">
    <property type="nucleotide sequence ID" value="NC_008532.1"/>
</dbReference>
<dbReference type="SMR" id="Q03L30"/>
<dbReference type="KEGG" id="ste:STER_0851"/>
<dbReference type="HOGENOM" id="CLU_053818_1_1_9"/>
<dbReference type="UniPathway" id="UPA00241">
    <property type="reaction ID" value="UER00352"/>
</dbReference>
<dbReference type="GO" id="GO:0005737">
    <property type="term" value="C:cytoplasm"/>
    <property type="evidence" value="ECO:0007669"/>
    <property type="project" value="UniProtKB-SubCell"/>
</dbReference>
<dbReference type="GO" id="GO:0005524">
    <property type="term" value="F:ATP binding"/>
    <property type="evidence" value="ECO:0007669"/>
    <property type="project" value="UniProtKB-UniRule"/>
</dbReference>
<dbReference type="GO" id="GO:0004594">
    <property type="term" value="F:pantothenate kinase activity"/>
    <property type="evidence" value="ECO:0007669"/>
    <property type="project" value="UniProtKB-UniRule"/>
</dbReference>
<dbReference type="GO" id="GO:0015937">
    <property type="term" value="P:coenzyme A biosynthetic process"/>
    <property type="evidence" value="ECO:0007669"/>
    <property type="project" value="UniProtKB-UniRule"/>
</dbReference>
<dbReference type="CDD" id="cd02025">
    <property type="entry name" value="PanK"/>
    <property type="match status" value="1"/>
</dbReference>
<dbReference type="Gene3D" id="3.40.50.300">
    <property type="entry name" value="P-loop containing nucleotide triphosphate hydrolases"/>
    <property type="match status" value="1"/>
</dbReference>
<dbReference type="HAMAP" id="MF_00215">
    <property type="entry name" value="Pantothen_kinase_1"/>
    <property type="match status" value="1"/>
</dbReference>
<dbReference type="InterPro" id="IPR027417">
    <property type="entry name" value="P-loop_NTPase"/>
</dbReference>
<dbReference type="InterPro" id="IPR004566">
    <property type="entry name" value="PanK"/>
</dbReference>
<dbReference type="InterPro" id="IPR006083">
    <property type="entry name" value="PRK/URK"/>
</dbReference>
<dbReference type="NCBIfam" id="TIGR00554">
    <property type="entry name" value="panK_bact"/>
    <property type="match status" value="1"/>
</dbReference>
<dbReference type="PANTHER" id="PTHR10285">
    <property type="entry name" value="URIDINE KINASE"/>
    <property type="match status" value="1"/>
</dbReference>
<dbReference type="Pfam" id="PF00485">
    <property type="entry name" value="PRK"/>
    <property type="match status" value="1"/>
</dbReference>
<dbReference type="PIRSF" id="PIRSF000545">
    <property type="entry name" value="Pantothenate_kin"/>
    <property type="match status" value="1"/>
</dbReference>
<dbReference type="SUPFAM" id="SSF52540">
    <property type="entry name" value="P-loop containing nucleoside triphosphate hydrolases"/>
    <property type="match status" value="1"/>
</dbReference>
<reference key="1">
    <citation type="journal article" date="2006" name="Proc. Natl. Acad. Sci. U.S.A.">
        <title>Comparative genomics of the lactic acid bacteria.</title>
        <authorList>
            <person name="Makarova K.S."/>
            <person name="Slesarev A."/>
            <person name="Wolf Y.I."/>
            <person name="Sorokin A."/>
            <person name="Mirkin B."/>
            <person name="Koonin E.V."/>
            <person name="Pavlov A."/>
            <person name="Pavlova N."/>
            <person name="Karamychev V."/>
            <person name="Polouchine N."/>
            <person name="Shakhova V."/>
            <person name="Grigoriev I."/>
            <person name="Lou Y."/>
            <person name="Rohksar D."/>
            <person name="Lucas S."/>
            <person name="Huang K."/>
            <person name="Goodstein D.M."/>
            <person name="Hawkins T."/>
            <person name="Plengvidhya V."/>
            <person name="Welker D."/>
            <person name="Hughes J."/>
            <person name="Goh Y."/>
            <person name="Benson A."/>
            <person name="Baldwin K."/>
            <person name="Lee J.-H."/>
            <person name="Diaz-Muniz I."/>
            <person name="Dosti B."/>
            <person name="Smeianov V."/>
            <person name="Wechter W."/>
            <person name="Barabote R."/>
            <person name="Lorca G."/>
            <person name="Altermann E."/>
            <person name="Barrangou R."/>
            <person name="Ganesan B."/>
            <person name="Xie Y."/>
            <person name="Rawsthorne H."/>
            <person name="Tamir D."/>
            <person name="Parker C."/>
            <person name="Breidt F."/>
            <person name="Broadbent J.R."/>
            <person name="Hutkins R."/>
            <person name="O'Sullivan D."/>
            <person name="Steele J."/>
            <person name="Unlu G."/>
            <person name="Saier M.H. Jr."/>
            <person name="Klaenhammer T."/>
            <person name="Richardson P."/>
            <person name="Kozyavkin S."/>
            <person name="Weimer B.C."/>
            <person name="Mills D.A."/>
        </authorList>
    </citation>
    <scope>NUCLEOTIDE SEQUENCE [LARGE SCALE GENOMIC DNA]</scope>
    <source>
        <strain>ATCC BAA-491 / LMD-9</strain>
    </source>
</reference>
<comment type="catalytic activity">
    <reaction evidence="1">
        <text>(R)-pantothenate + ATP = (R)-4'-phosphopantothenate + ADP + H(+)</text>
        <dbReference type="Rhea" id="RHEA:16373"/>
        <dbReference type="ChEBI" id="CHEBI:10986"/>
        <dbReference type="ChEBI" id="CHEBI:15378"/>
        <dbReference type="ChEBI" id="CHEBI:29032"/>
        <dbReference type="ChEBI" id="CHEBI:30616"/>
        <dbReference type="ChEBI" id="CHEBI:456216"/>
        <dbReference type="EC" id="2.7.1.33"/>
    </reaction>
</comment>
<comment type="pathway">
    <text evidence="1">Cofactor biosynthesis; coenzyme A biosynthesis; CoA from (R)-pantothenate: step 1/5.</text>
</comment>
<comment type="subcellular location">
    <subcellularLocation>
        <location evidence="1">Cytoplasm</location>
    </subcellularLocation>
</comment>
<comment type="similarity">
    <text evidence="1">Belongs to the prokaryotic pantothenate kinase family.</text>
</comment>
<evidence type="ECO:0000255" key="1">
    <source>
        <dbReference type="HAMAP-Rule" id="MF_00215"/>
    </source>
</evidence>
<feature type="chain" id="PRO_1000043273" description="Pantothenate kinase">
    <location>
        <begin position="1"/>
        <end position="306"/>
    </location>
</feature>
<feature type="binding site" evidence="1">
    <location>
        <begin position="91"/>
        <end position="98"/>
    </location>
    <ligand>
        <name>ATP</name>
        <dbReference type="ChEBI" id="CHEBI:30616"/>
    </ligand>
</feature>
<proteinExistence type="inferred from homology"/>
<name>COAA_STRTD</name>
<sequence>MLNEFINFETISRSDWQRFYQEDQVSLTPEELESIRSLNDKIDVQEVRDIYLPLINLIRIYHRAAEDLTFSKGIFLQKAQANRPFIIGISGSVAVGKSTTSRLLQLLLQRTFPKAKVDMVTTDGFLFPNQVLIDKGILNRKGFPESYDMPLLLNFLDTVKNGGDVNIPVYSHEIYDIVPGLTQKISQPNFLIVEGINVFQNPINQRLYMSDYFDFSIYIDADVKNIKTWYLERFQTLLELARKDENNYYHRFTKLTKEEALSLAQKTWKEINLVNLENYIEPTRNRAELILHKGDSHKIDLIHLKK</sequence>
<protein>
    <recommendedName>
        <fullName evidence="1">Pantothenate kinase</fullName>
        <ecNumber evidence="1">2.7.1.33</ecNumber>
    </recommendedName>
    <alternativeName>
        <fullName evidence="1">Pantothenic acid kinase</fullName>
    </alternativeName>
</protein>
<organism>
    <name type="scientific">Streptococcus thermophilus (strain ATCC BAA-491 / LMD-9)</name>
    <dbReference type="NCBI Taxonomy" id="322159"/>
    <lineage>
        <taxon>Bacteria</taxon>
        <taxon>Bacillati</taxon>
        <taxon>Bacillota</taxon>
        <taxon>Bacilli</taxon>
        <taxon>Lactobacillales</taxon>
        <taxon>Streptococcaceae</taxon>
        <taxon>Streptococcus</taxon>
    </lineage>
</organism>
<gene>
    <name evidence="1" type="primary">coaA</name>
    <name type="ordered locus">STER_0851</name>
</gene>
<accession>Q03L30</accession>
<keyword id="KW-0067">ATP-binding</keyword>
<keyword id="KW-0173">Coenzyme A biosynthesis</keyword>
<keyword id="KW-0963">Cytoplasm</keyword>
<keyword id="KW-0418">Kinase</keyword>
<keyword id="KW-0547">Nucleotide-binding</keyword>
<keyword id="KW-0808">Transferase</keyword>